<sequence length="313" mass="34707">MAALQTLREWIGIQQFPPATQSKLLEILGKYKEEDVSSLTVLVMGKGGVGKSSTVNSVIGEKAAAVSTFQSEGLRPTLVSRTRSGFTLNIIDTPGLIEGGYVNDQAINIIKRFLLNMTIDVLLYVDRLDVYRVDDLDRQVVGAITDAFGKEIWKKSALVLTHAQFSPPDGLNYNHFVSKRSNALLKVIQTGAQLKKQDLQGFSIPVILVENSGRCHKNESDEKILPCGTSWIPNLFNKITEISFNGNKAIHVDKKLVEGPNPNERGKKLIPLMFAFQYLLVMKPLVRAIKSDVSRESKPAWELRDSGLASRRS</sequence>
<comment type="function">
    <text evidence="5 6 7 8">GTPase involved in protein precursor import into chloroplasts. Seems to recognize chloroplast-destined precursor proteins and regulate their presentation to the translocation channel through GTP hydrolysis. Probably specialized in the import of nuclear encoded non-photosynthetic preproteins from the cytoplasm to the chloroplast.</text>
</comment>
<comment type="cofactor">
    <cofactor evidence="1">
        <name>Mg(2+)</name>
        <dbReference type="ChEBI" id="CHEBI:18420"/>
    </cofactor>
    <text evidence="1">Binds 1 Mg(2+) ion by subunit.</text>
</comment>
<comment type="biophysicochemical properties">
    <kinetics>
        <KM evidence="5 9">130 nM for GDP (at pH 7.4)</KM>
        <KM evidence="5 9">6.3 uM for GTP (at pH 7.6 and 25 degrees Celsius)</KM>
        <Vmax evidence="5 9">940.0 nmol/min/ug enzyme with GTP as substrate (at pH 7.4)</Vmax>
    </kinetics>
</comment>
<comment type="subunit">
    <text evidence="4 10">Homodimer, heterodimer with TOC33, and monomer. Part of the TOC core complex that includes 1 protein for the specific recognition of transit peptides surrounded by a ring composed of four proteins forming translocation channels, and four to five GTP-binding proteins providing energy. This core complex can interact with components of the TIC complex to form a larger import complex. Chloroplastic protein precursor such as prSS (precursor of the RuBisCO small subunit) interacts with these complexes. The TOC complex contains a specific subset of polar lipids such as digalactosyldiacylglyceride (DGDG), phosphatidylcholine (PC) and phosphatidylglycerol (PG). Interacts at least with TOC75. Interacts with AKR2A and AKR2B (PubMed:20215589).</text>
</comment>
<comment type="interaction">
    <interactant intactId="EBI-1766808">
        <id>Q38906</id>
    </interactant>
    <interactant intactId="EBI-639063">
        <id>O81283</id>
        <label>TOC159</label>
    </interactant>
    <organismsDiffer>false</organismsDiffer>
    <experiments>5</experiments>
</comment>
<comment type="interaction">
    <interactant intactId="EBI-1766808">
        <id>Q38906</id>
    </interactant>
    <interactant intactId="EBI-1766808">
        <id>Q38906</id>
        <label>TOC34</label>
    </interactant>
    <organismsDiffer>false</organismsDiffer>
    <experiments>2</experiments>
</comment>
<comment type="interaction">
    <interactant intactId="EBI-1766808">
        <id>Q38906</id>
    </interactant>
    <interactant intactId="EBI-1766821">
        <id>P69249</id>
        <label>RBCS</label>
    </interactant>
    <organismsDiffer>true</organismsDiffer>
    <experiments>6</experiments>
</comment>
<comment type="subcellular location">
    <subcellularLocation>
        <location evidence="4">Plastid</location>
        <location evidence="4">Chloroplast outer membrane</location>
        <topology evidence="4">Single-pass membrane protein</topology>
    </subcellularLocation>
    <text>May contain beta barrel transmembrane regions.</text>
</comment>
<comment type="tissue specificity">
    <text evidence="4 6">Mostly expressed in roots and flowers, and, to a lower extent, in seedlings, stems, and leaves.</text>
</comment>
<comment type="developmental stage">
    <text evidence="4 6">Expressed at a relatively uniform, low level at most stages of development. Observed in cotyledons and hypocotyls of young seedling. Expressed in apical meristems. Found in the whole roots. Expressed in middle-aged leaves. In flowers, mostly localized in meristems, but is also present in all organs.</text>
</comment>
<comment type="induction">
    <text evidence="6">Induced in light but repressed in darkness.</text>
</comment>
<comment type="similarity">
    <text evidence="12">Belongs to the TRAFAC class TrmE-Era-EngA-EngB-Septin-like GTPase superfamily. AIG1/Toc34/Toc159-like paraseptin GTPase family. TOC34 subfamily.</text>
</comment>
<keyword id="KW-0007">Acetylation</keyword>
<keyword id="KW-0150">Chloroplast</keyword>
<keyword id="KW-0342">GTP-binding</keyword>
<keyword id="KW-0378">Hydrolase</keyword>
<keyword id="KW-0460">Magnesium</keyword>
<keyword id="KW-0472">Membrane</keyword>
<keyword id="KW-0479">Metal-binding</keyword>
<keyword id="KW-0547">Nucleotide-binding</keyword>
<keyword id="KW-0934">Plastid</keyword>
<keyword id="KW-1002">Plastid outer membrane</keyword>
<keyword id="KW-0653">Protein transport</keyword>
<keyword id="KW-0675">Receptor</keyword>
<keyword id="KW-1185">Reference proteome</keyword>
<keyword id="KW-0812">Transmembrane</keyword>
<keyword id="KW-1133">Transmembrane helix</keyword>
<keyword id="KW-0813">Transport</keyword>
<name>TOC34_ARATH</name>
<dbReference type="EC" id="3.6.5.-"/>
<dbReference type="EMBL" id="U43377">
    <property type="protein sequence ID" value="AAD09203.1"/>
    <property type="molecule type" value="mRNA"/>
</dbReference>
<dbReference type="EMBL" id="AJ132696">
    <property type="protein sequence ID" value="CAC17699.1"/>
    <property type="molecule type" value="mRNA"/>
</dbReference>
<dbReference type="EMBL" id="AB005245">
    <property type="protein sequence ID" value="BAB11522.1"/>
    <property type="molecule type" value="Genomic_DNA"/>
</dbReference>
<dbReference type="EMBL" id="CP002688">
    <property type="protein sequence ID" value="AED90814.1"/>
    <property type="molecule type" value="Genomic_DNA"/>
</dbReference>
<dbReference type="EMBL" id="CP002688">
    <property type="protein sequence ID" value="AED90815.1"/>
    <property type="molecule type" value="Genomic_DNA"/>
</dbReference>
<dbReference type="EMBL" id="CP002688">
    <property type="protein sequence ID" value="AED90816.1"/>
    <property type="molecule type" value="Genomic_DNA"/>
</dbReference>
<dbReference type="EMBL" id="AK229425">
    <property type="protein sequence ID" value="BAF01285.1"/>
    <property type="molecule type" value="mRNA"/>
</dbReference>
<dbReference type="EMBL" id="AY088447">
    <property type="protein sequence ID" value="AAM65983.1"/>
    <property type="molecule type" value="mRNA"/>
</dbReference>
<dbReference type="RefSeq" id="NP_196119.1">
    <property type="nucleotide sequence ID" value="NM_120582.5"/>
</dbReference>
<dbReference type="RefSeq" id="NP_850768.1">
    <property type="nucleotide sequence ID" value="NM_180437.2"/>
</dbReference>
<dbReference type="RefSeq" id="NP_974732.1">
    <property type="nucleotide sequence ID" value="NM_203003.3"/>
</dbReference>
<dbReference type="SMR" id="Q38906"/>
<dbReference type="BioGRID" id="15661">
    <property type="interactions" value="12"/>
</dbReference>
<dbReference type="DIP" id="DIP-29773N"/>
<dbReference type="FunCoup" id="Q38906">
    <property type="interactions" value="1561"/>
</dbReference>
<dbReference type="IntAct" id="Q38906">
    <property type="interactions" value="5"/>
</dbReference>
<dbReference type="STRING" id="3702.Q38906"/>
<dbReference type="iPTMnet" id="Q38906"/>
<dbReference type="SwissPalm" id="Q38906"/>
<dbReference type="PaxDb" id="3702-AT5G05000.3"/>
<dbReference type="ProteomicsDB" id="232462"/>
<dbReference type="EnsemblPlants" id="AT5G05000.1">
    <property type="protein sequence ID" value="AT5G05000.1"/>
    <property type="gene ID" value="AT5G05000"/>
</dbReference>
<dbReference type="EnsemblPlants" id="AT5G05000.2">
    <property type="protein sequence ID" value="AT5G05000.2"/>
    <property type="gene ID" value="AT5G05000"/>
</dbReference>
<dbReference type="EnsemblPlants" id="AT5G05000.3">
    <property type="protein sequence ID" value="AT5G05000.3"/>
    <property type="gene ID" value="AT5G05000"/>
</dbReference>
<dbReference type="GeneID" id="830382"/>
<dbReference type="Gramene" id="AT5G05000.1">
    <property type="protein sequence ID" value="AT5G05000.1"/>
    <property type="gene ID" value="AT5G05000"/>
</dbReference>
<dbReference type="Gramene" id="AT5G05000.2">
    <property type="protein sequence ID" value="AT5G05000.2"/>
    <property type="gene ID" value="AT5G05000"/>
</dbReference>
<dbReference type="Gramene" id="AT5G05000.3">
    <property type="protein sequence ID" value="AT5G05000.3"/>
    <property type="gene ID" value="AT5G05000"/>
</dbReference>
<dbReference type="KEGG" id="ath:AT5G05000"/>
<dbReference type="Araport" id="AT5G05000"/>
<dbReference type="TAIR" id="AT5G05000">
    <property type="gene designation" value="TOC34"/>
</dbReference>
<dbReference type="eggNOG" id="ENOG502QSV2">
    <property type="taxonomic scope" value="Eukaryota"/>
</dbReference>
<dbReference type="HOGENOM" id="CLU_051932_0_0_1"/>
<dbReference type="InParanoid" id="Q38906"/>
<dbReference type="OMA" id="QPREWTG"/>
<dbReference type="PhylomeDB" id="Q38906"/>
<dbReference type="CD-CODE" id="4299E36E">
    <property type="entry name" value="Nucleolus"/>
</dbReference>
<dbReference type="PRO" id="PR:Q38906"/>
<dbReference type="Proteomes" id="UP000006548">
    <property type="component" value="Chromosome 5"/>
</dbReference>
<dbReference type="ExpressionAtlas" id="Q38906">
    <property type="expression patterns" value="baseline and differential"/>
</dbReference>
<dbReference type="GO" id="GO:0009507">
    <property type="term" value="C:chloroplast"/>
    <property type="evidence" value="ECO:0007005"/>
    <property type="project" value="TAIR"/>
</dbReference>
<dbReference type="GO" id="GO:0009941">
    <property type="term" value="C:chloroplast envelope"/>
    <property type="evidence" value="ECO:0007005"/>
    <property type="project" value="TAIR"/>
</dbReference>
<dbReference type="GO" id="GO:0009707">
    <property type="term" value="C:chloroplast outer membrane"/>
    <property type="evidence" value="ECO:0000314"/>
    <property type="project" value="TAIR"/>
</dbReference>
<dbReference type="GO" id="GO:0005886">
    <property type="term" value="C:plasma membrane"/>
    <property type="evidence" value="ECO:0007005"/>
    <property type="project" value="TAIR"/>
</dbReference>
<dbReference type="GO" id="GO:0009536">
    <property type="term" value="C:plastid"/>
    <property type="evidence" value="ECO:0007005"/>
    <property type="project" value="TAIR"/>
</dbReference>
<dbReference type="GO" id="GO:0005525">
    <property type="term" value="F:GTP binding"/>
    <property type="evidence" value="ECO:0000304"/>
    <property type="project" value="TAIR"/>
</dbReference>
<dbReference type="GO" id="GO:0003924">
    <property type="term" value="F:GTPase activity"/>
    <property type="evidence" value="ECO:0000304"/>
    <property type="project" value="TAIR"/>
</dbReference>
<dbReference type="GO" id="GO:0042802">
    <property type="term" value="F:identical protein binding"/>
    <property type="evidence" value="ECO:0000353"/>
    <property type="project" value="IntAct"/>
</dbReference>
<dbReference type="GO" id="GO:0046872">
    <property type="term" value="F:metal ion binding"/>
    <property type="evidence" value="ECO:0007669"/>
    <property type="project" value="UniProtKB-KW"/>
</dbReference>
<dbReference type="GO" id="GO:0015450">
    <property type="term" value="F:protein-transporting ATPase activity"/>
    <property type="evidence" value="ECO:0007669"/>
    <property type="project" value="InterPro"/>
</dbReference>
<dbReference type="GO" id="GO:0019750">
    <property type="term" value="P:chloroplast localization"/>
    <property type="evidence" value="ECO:0000304"/>
    <property type="project" value="TAIR"/>
</dbReference>
<dbReference type="GO" id="GO:0006886">
    <property type="term" value="P:intracellular protein transport"/>
    <property type="evidence" value="ECO:0007669"/>
    <property type="project" value="InterPro"/>
</dbReference>
<dbReference type="GO" id="GO:0045036">
    <property type="term" value="P:protein targeting to chloroplast"/>
    <property type="evidence" value="ECO:0000304"/>
    <property type="project" value="TAIR"/>
</dbReference>
<dbReference type="CDD" id="cd01853">
    <property type="entry name" value="Toc34_like"/>
    <property type="match status" value="1"/>
</dbReference>
<dbReference type="FunFam" id="3.40.50.300:FF:001070">
    <property type="entry name" value="Translocase of chloroplast"/>
    <property type="match status" value="1"/>
</dbReference>
<dbReference type="Gene3D" id="3.40.50.300">
    <property type="entry name" value="P-loop containing nucleotide triphosphate hydrolases"/>
    <property type="match status" value="1"/>
</dbReference>
<dbReference type="InterPro" id="IPR006703">
    <property type="entry name" value="G_AIG1"/>
</dbReference>
<dbReference type="InterPro" id="IPR045058">
    <property type="entry name" value="GIMA/IAN/Toc"/>
</dbReference>
<dbReference type="InterPro" id="IPR027417">
    <property type="entry name" value="P-loop_NTPase"/>
</dbReference>
<dbReference type="InterPro" id="IPR005688">
    <property type="entry name" value="Toc34"/>
</dbReference>
<dbReference type="NCBIfam" id="TIGR00991">
    <property type="entry name" value="3a0901s02IAP34"/>
    <property type="match status" value="1"/>
</dbReference>
<dbReference type="PANTHER" id="PTHR10903">
    <property type="entry name" value="GTPASE, IMAP FAMILY MEMBER-RELATED"/>
    <property type="match status" value="1"/>
</dbReference>
<dbReference type="PANTHER" id="PTHR10903:SF172">
    <property type="entry name" value="TRANSLOCASE OF CHLOROPLAST 34, CHLOROPLASTIC"/>
    <property type="match status" value="1"/>
</dbReference>
<dbReference type="Pfam" id="PF04548">
    <property type="entry name" value="AIG1"/>
    <property type="match status" value="1"/>
</dbReference>
<dbReference type="PIRSF" id="PIRSF038134">
    <property type="entry name" value="Toc34"/>
    <property type="match status" value="1"/>
</dbReference>
<dbReference type="SUPFAM" id="SSF52540">
    <property type="entry name" value="P-loop containing nucleoside triphosphate hydrolases"/>
    <property type="match status" value="1"/>
</dbReference>
<dbReference type="PROSITE" id="PS51720">
    <property type="entry name" value="G_AIG1"/>
    <property type="match status" value="1"/>
</dbReference>
<gene>
    <name type="primary">TOC34</name>
    <name type="synonym">OEP34</name>
    <name type="synonym">PPI3</name>
    <name type="ordered locus">At5g05000</name>
    <name type="ORF">MUG13.14</name>
</gene>
<protein>
    <recommendedName>
        <fullName>Translocase of chloroplast 34, chloroplastic</fullName>
        <shortName>AtToc34</shortName>
        <ecNumber>3.6.5.-</ecNumber>
    </recommendedName>
    <alternativeName>
        <fullName>34 kDa chloroplast outer envelope protein</fullName>
    </alternativeName>
    <alternativeName>
        <fullName>GTP-binding protein OEP34</fullName>
    </alternativeName>
    <alternativeName>
        <fullName>Plastid protein import 3</fullName>
    </alternativeName>
</protein>
<evidence type="ECO:0000250" key="1"/>
<evidence type="ECO:0000255" key="2"/>
<evidence type="ECO:0000255" key="3">
    <source>
        <dbReference type="PROSITE-ProRule" id="PRU01057"/>
    </source>
</evidence>
<evidence type="ECO:0000269" key="4">
    <source>
    </source>
</evidence>
<evidence type="ECO:0000269" key="5">
    <source>
    </source>
</evidence>
<evidence type="ECO:0000269" key="6">
    <source>
    </source>
</evidence>
<evidence type="ECO:0000269" key="7">
    <source>
    </source>
</evidence>
<evidence type="ECO:0000269" key="8">
    <source>
    </source>
</evidence>
<evidence type="ECO:0000269" key="9">
    <source>
    </source>
</evidence>
<evidence type="ECO:0000269" key="10">
    <source>
    </source>
</evidence>
<evidence type="ECO:0000269" key="11">
    <source>
    </source>
</evidence>
<evidence type="ECO:0000305" key="12"/>
<evidence type="ECO:0007744" key="13">
    <source>
    </source>
</evidence>
<accession>Q38906</accession>
<accession>Q0WNL4</accession>
<accession>Q8L9G5</accession>
<accession>Q9FF74</accession>
<accession>Q9GDD2</accession>
<organism>
    <name type="scientific">Arabidopsis thaliana</name>
    <name type="common">Mouse-ear cress</name>
    <dbReference type="NCBI Taxonomy" id="3702"/>
    <lineage>
        <taxon>Eukaryota</taxon>
        <taxon>Viridiplantae</taxon>
        <taxon>Streptophyta</taxon>
        <taxon>Embryophyta</taxon>
        <taxon>Tracheophyta</taxon>
        <taxon>Spermatophyta</taxon>
        <taxon>Magnoliopsida</taxon>
        <taxon>eudicotyledons</taxon>
        <taxon>Gunneridae</taxon>
        <taxon>Pentapetalae</taxon>
        <taxon>rosids</taxon>
        <taxon>malvids</taxon>
        <taxon>Brassicales</taxon>
        <taxon>Brassicaceae</taxon>
        <taxon>Camelineae</taxon>
        <taxon>Arabidopsis</taxon>
    </lineage>
</organism>
<reference key="1">
    <citation type="online journal article" date="1995" name="Plant Gene Register">
        <title>Arabidopsis homologue of OEP34, a component of the pea chloroplast protein import apparatus.</title>
        <authorList>
            <person name="Chen L.-J."/>
            <person name="Li H.-M."/>
        </authorList>
        <locator>PGR95-140</locator>
    </citation>
    <scope>NUCLEOTIDE SEQUENCE [MRNA]</scope>
    <source>
        <strain>cv. Columbia</strain>
    </source>
</reference>
<reference key="2">
    <citation type="journal article" date="2000" name="Plant J.">
        <title>Functional analysis of the two Arabidopsis homologues of Toc34, a component of the chloroplast protein import apparatus.</title>
        <authorList>
            <person name="Gutensohn M."/>
            <person name="Schulz B.I."/>
            <person name="Nicolay P."/>
            <person name="Fluegge U.-I."/>
        </authorList>
    </citation>
    <scope>NUCLEOTIDE SEQUENCE [MRNA]</scope>
    <scope>CHARACTERIZATION</scope>
    <scope>SUBCELLULAR LOCATION</scope>
    <scope>TISSUE SPECIFICITY</scope>
    <scope>DEVELOPMENTAL STAGE</scope>
    <scope>INTERACTION WITH TOC75</scope>
    <source>
        <strain>cv. Columbia</strain>
    </source>
</reference>
<reference key="3">
    <citation type="journal article" date="1997" name="DNA Res.">
        <title>Structural analysis of Arabidopsis thaliana chromosome 5. I. Sequence features of the 1.6 Mb regions covered by twenty physically assigned P1 clones.</title>
        <authorList>
            <person name="Sato S."/>
            <person name="Kotani H."/>
            <person name="Nakamura Y."/>
            <person name="Kaneko T."/>
            <person name="Asamizu E."/>
            <person name="Fukami M."/>
            <person name="Miyajima N."/>
            <person name="Tabata S."/>
        </authorList>
    </citation>
    <scope>NUCLEOTIDE SEQUENCE [LARGE SCALE GENOMIC DNA]</scope>
    <source>
        <strain>cv. Columbia</strain>
    </source>
</reference>
<reference key="4">
    <citation type="journal article" date="2017" name="Plant J.">
        <title>Araport11: a complete reannotation of the Arabidopsis thaliana reference genome.</title>
        <authorList>
            <person name="Cheng C.Y."/>
            <person name="Krishnakumar V."/>
            <person name="Chan A.P."/>
            <person name="Thibaud-Nissen F."/>
            <person name="Schobel S."/>
            <person name="Town C.D."/>
        </authorList>
    </citation>
    <scope>GENOME REANNOTATION</scope>
    <source>
        <strain>cv. Columbia</strain>
    </source>
</reference>
<reference key="5">
    <citation type="submission" date="2006-07" db="EMBL/GenBank/DDBJ databases">
        <title>Large-scale analysis of RIKEN Arabidopsis full-length (RAFL) cDNAs.</title>
        <authorList>
            <person name="Totoki Y."/>
            <person name="Seki M."/>
            <person name="Ishida J."/>
            <person name="Nakajima M."/>
            <person name="Enju A."/>
            <person name="Kamiya A."/>
            <person name="Narusaka M."/>
            <person name="Shin-i T."/>
            <person name="Nakagawa M."/>
            <person name="Sakamoto N."/>
            <person name="Oishi K."/>
            <person name="Kohara Y."/>
            <person name="Kobayashi M."/>
            <person name="Toyoda A."/>
            <person name="Sakaki Y."/>
            <person name="Sakurai T."/>
            <person name="Iida K."/>
            <person name="Akiyama K."/>
            <person name="Satou M."/>
            <person name="Toyoda T."/>
            <person name="Konagaya A."/>
            <person name="Carninci P."/>
            <person name="Kawai J."/>
            <person name="Hayashizaki Y."/>
            <person name="Shinozaki K."/>
        </authorList>
    </citation>
    <scope>NUCLEOTIDE SEQUENCE [LARGE SCALE MRNA]</scope>
    <source>
        <strain>cv. Columbia</strain>
    </source>
</reference>
<reference key="6">
    <citation type="submission" date="2002-03" db="EMBL/GenBank/DDBJ databases">
        <title>Full-length cDNA from Arabidopsis thaliana.</title>
        <authorList>
            <person name="Brover V.V."/>
            <person name="Troukhan M.E."/>
            <person name="Alexandrov N.A."/>
            <person name="Lu Y.-P."/>
            <person name="Flavell R.B."/>
            <person name="Feldmann K.A."/>
        </authorList>
    </citation>
    <scope>NUCLEOTIDE SEQUENCE [LARGE SCALE MRNA]</scope>
</reference>
<reference key="7">
    <citation type="journal article" date="2003" name="Biochemistry">
        <title>Two Toc34 homologues with different properties.</title>
        <authorList>
            <person name="Jelic M."/>
            <person name="Soll J."/>
            <person name="Schleiff E."/>
        </authorList>
    </citation>
    <scope>FUNCTION</scope>
    <scope>BIOPHYSICOCHEMICAL PROPERTIES</scope>
    <scope>DIMERIZATION WITH TOC33</scope>
</reference>
<reference key="8">
    <citation type="journal article" date="2003" name="Plant Cell">
        <title>The Arabidopsis ppi1 mutant is specifically defective in the expression, chloroplast import, and accumulation of photosynthetic proteins.</title>
        <authorList>
            <person name="Kubis S."/>
            <person name="Baldwin A."/>
            <person name="Patel R."/>
            <person name="Razzaq A."/>
            <person name="Dupree P."/>
            <person name="Lilley K."/>
            <person name="Kurth J."/>
            <person name="Leister D."/>
            <person name="Jarvis P."/>
        </authorList>
    </citation>
    <scope>FUNCTION</scope>
    <scope>TISSUE SPECIFICITY</scope>
    <scope>INDUCTION BY LIGHT</scope>
    <scope>DEVELOPMENTAL STAGE</scope>
</reference>
<reference key="9">
    <citation type="journal article" date="2004" name="Plant J.">
        <title>An outer envelope membrane component of the plastid protein import apparatus plays an essential role in Arabidopsis.</title>
        <authorList>
            <person name="Constan D."/>
            <person name="Patel R."/>
            <person name="Keegstra K."/>
            <person name="Jarvis P."/>
        </authorList>
    </citation>
    <scope>FUNCTION</scope>
</reference>
<reference key="10">
    <citation type="journal article" date="2006" name="Plant Biol.">
        <title>Deletion of core components of the plastid protein import machinery causes differential arrest of embryo development in Arabidopsis thaliana.</title>
        <authorList>
            <person name="Hust B."/>
            <person name="Gutensohn M."/>
        </authorList>
    </citation>
    <scope>FUNCTION</scope>
</reference>
<reference key="11">
    <citation type="journal article" date="2007" name="J. Biol. Chem.">
        <title>In vitro comparative kinetic analysis of the chloroplast Toc GTPases.</title>
        <authorList>
            <person name="Reddick L.E."/>
            <person name="Vaughn M.D."/>
            <person name="Wright S.J."/>
            <person name="Campbell I.M."/>
            <person name="Bruce B.D."/>
        </authorList>
    </citation>
    <scope>BIOPHYSICOCHEMICAL PROPERTIES</scope>
</reference>
<reference key="12">
    <citation type="journal article" date="2010" name="Plant Cell">
        <title>ANKYRIN REPEAT-CONTAINING PROTEIN 2A is an essential molecular chaperone for peroxisomal membrane-bound ASCORBATE PEROXIDASE3 in Arabidopsis.</title>
        <authorList>
            <person name="Shen G."/>
            <person name="Kuppu S."/>
            <person name="Venkataramani S."/>
            <person name="Wang J."/>
            <person name="Yan J."/>
            <person name="Qiu X."/>
            <person name="Zhang H."/>
        </authorList>
    </citation>
    <scope>INTERACTION WITH AKR2A AND AKR2B</scope>
    <source>
        <strain>cv. C24</strain>
        <strain>cv. Columbia</strain>
    </source>
</reference>
<reference key="13">
    <citation type="journal article" date="2010" name="Plant Signal. Behav.">
        <title>Is AKR2A an essential molecular chaperone for a class of membrane-bound proteins in plants?</title>
        <authorList>
            <person name="Zhang H."/>
            <person name="Li X."/>
            <person name="Zhang Y."/>
            <person name="Kuppu S."/>
            <person name="Shen G."/>
        </authorList>
    </citation>
    <scope>AKR2A-BINDING SEQUENCE</scope>
    <scope>REVIEW</scope>
</reference>
<reference key="14">
    <citation type="journal article" date="2012" name="Mol. Cell. Proteomics">
        <title>Comparative large-scale characterisation of plant vs. mammal proteins reveals similar and idiosyncratic N-alpha acetylation features.</title>
        <authorList>
            <person name="Bienvenut W.V."/>
            <person name="Sumpton D."/>
            <person name="Martinez A."/>
            <person name="Lilla S."/>
            <person name="Espagne C."/>
            <person name="Meinnel T."/>
            <person name="Giglione C."/>
        </authorList>
    </citation>
    <scope>ACETYLATION [LARGE SCALE ANALYSIS] AT ALA-2</scope>
    <scope>CLEAVAGE OF INITIATOR METHIONINE [LARGE SCALE ANALYSIS]</scope>
    <scope>IDENTIFICATION BY MASS SPECTROMETRY [LARGE SCALE ANALYSIS]</scope>
</reference>
<proteinExistence type="evidence at protein level"/>
<feature type="initiator methionine" description="Removed" evidence="13">
    <location>
        <position position="1"/>
    </location>
</feature>
<feature type="chain" id="PRO_0000144792" description="Translocase of chloroplast 34, chloroplastic">
    <location>
        <begin position="2"/>
        <end position="313"/>
    </location>
</feature>
<feature type="transmembrane region" description="Helical" evidence="2">
    <location>
        <begin position="269"/>
        <end position="286"/>
    </location>
</feature>
<feature type="domain" description="AIG1-type G" evidence="3">
    <location>
        <begin position="36"/>
        <end position="260"/>
    </location>
</feature>
<feature type="region of interest" description="G1" evidence="3">
    <location>
        <begin position="45"/>
        <end position="52"/>
    </location>
</feature>
<feature type="region of interest" description="Homodimerization" evidence="1">
    <location>
        <begin position="67"/>
        <end position="70"/>
    </location>
</feature>
<feature type="region of interest" description="G2" evidence="3">
    <location>
        <begin position="71"/>
        <end position="75"/>
    </location>
</feature>
<feature type="region of interest" description="G3" evidence="3">
    <location>
        <begin position="92"/>
        <end position="95"/>
    </location>
</feature>
<feature type="region of interest" description="Homodimerization" evidence="1">
    <location>
        <begin position="127"/>
        <end position="132"/>
    </location>
</feature>
<feature type="region of interest" description="G4" evidence="3">
    <location>
        <begin position="161"/>
        <end position="164"/>
    </location>
</feature>
<feature type="region of interest" description="G5" evidence="3">
    <location>
        <begin position="210"/>
        <end position="212"/>
    </location>
</feature>
<feature type="short sequence motif" description="AKR2A-binding sequence (ABS) required for chloroplast outer envelope membrane targeting" evidence="11">
    <location>
        <begin position="287"/>
        <end position="295"/>
    </location>
</feature>
<feature type="binding site" evidence="1">
    <location>
        <begin position="48"/>
        <end position="53"/>
    </location>
    <ligand>
        <name>GTP</name>
        <dbReference type="ChEBI" id="CHEBI:37565"/>
    </ligand>
</feature>
<feature type="binding site" evidence="1">
    <location>
        <position position="52"/>
    </location>
    <ligand>
        <name>Mg(2+)</name>
        <dbReference type="ChEBI" id="CHEBI:18420"/>
    </ligand>
</feature>
<feature type="binding site" evidence="1">
    <location>
        <begin position="67"/>
        <end position="72"/>
    </location>
    <ligand>
        <name>GTP</name>
        <dbReference type="ChEBI" id="CHEBI:37565"/>
    </ligand>
</feature>
<feature type="binding site" evidence="1">
    <location>
        <position position="70"/>
    </location>
    <ligand>
        <name>Mg(2+)</name>
        <dbReference type="ChEBI" id="CHEBI:18420"/>
    </ligand>
</feature>
<feature type="binding site" evidence="1">
    <location>
        <position position="162"/>
    </location>
    <ligand>
        <name>GTP</name>
        <dbReference type="ChEBI" id="CHEBI:37565"/>
    </ligand>
</feature>
<feature type="binding site" evidence="1">
    <location>
        <begin position="210"/>
        <end position="211"/>
    </location>
    <ligand>
        <name>GTP</name>
        <dbReference type="ChEBI" id="CHEBI:37565"/>
    </ligand>
</feature>
<feature type="modified residue" description="N-acetylalanine" evidence="13">
    <location>
        <position position="2"/>
    </location>
</feature>
<feature type="sequence conflict" description="In Ref. 6; AAM65983." evidence="12" ref="6">
    <original>M</original>
    <variation>I</variation>
    <location>
        <position position="44"/>
    </location>
</feature>
<feature type="sequence conflict" description="In Ref. 6; AAM65983." evidence="12" ref="6">
    <original>G</original>
    <variation>S</variation>
    <location>
        <position position="47"/>
    </location>
</feature>
<feature type="sequence conflict" description="In Ref. 1; AAD09203 and 2; CAC17699." evidence="12" ref="1 2">
    <original>P</original>
    <variation>L</variation>
    <location>
        <position position="299"/>
    </location>
</feature>